<sequence>MNLNEDSLRKIAELSRLNIRPKEKEATLRDFNKILEYVDQVKGLDVSSIRDDEIYFRHENSIRPDLVGQHLSREEIEKFAPSFQNGYFVVPKVIET</sequence>
<organism>
    <name type="scientific">Leptospira borgpetersenii serovar Hardjo-bovis (strain JB197)</name>
    <dbReference type="NCBI Taxonomy" id="355277"/>
    <lineage>
        <taxon>Bacteria</taxon>
        <taxon>Pseudomonadati</taxon>
        <taxon>Spirochaetota</taxon>
        <taxon>Spirochaetia</taxon>
        <taxon>Leptospirales</taxon>
        <taxon>Leptospiraceae</taxon>
        <taxon>Leptospira</taxon>
    </lineage>
</organism>
<name>GATC_LEPBJ</name>
<comment type="function">
    <text evidence="1">Allows the formation of correctly charged Asn-tRNA(Asn) or Gln-tRNA(Gln) through the transamidation of misacylated Asp-tRNA(Asn) or Glu-tRNA(Gln) in organisms which lack either or both of asparaginyl-tRNA or glutaminyl-tRNA synthetases. The reaction takes place in the presence of glutamine and ATP through an activated phospho-Asp-tRNA(Asn) or phospho-Glu-tRNA(Gln).</text>
</comment>
<comment type="catalytic activity">
    <reaction evidence="1">
        <text>L-glutamyl-tRNA(Gln) + L-glutamine + ATP + H2O = L-glutaminyl-tRNA(Gln) + L-glutamate + ADP + phosphate + H(+)</text>
        <dbReference type="Rhea" id="RHEA:17521"/>
        <dbReference type="Rhea" id="RHEA-COMP:9681"/>
        <dbReference type="Rhea" id="RHEA-COMP:9684"/>
        <dbReference type="ChEBI" id="CHEBI:15377"/>
        <dbReference type="ChEBI" id="CHEBI:15378"/>
        <dbReference type="ChEBI" id="CHEBI:29985"/>
        <dbReference type="ChEBI" id="CHEBI:30616"/>
        <dbReference type="ChEBI" id="CHEBI:43474"/>
        <dbReference type="ChEBI" id="CHEBI:58359"/>
        <dbReference type="ChEBI" id="CHEBI:78520"/>
        <dbReference type="ChEBI" id="CHEBI:78521"/>
        <dbReference type="ChEBI" id="CHEBI:456216"/>
    </reaction>
</comment>
<comment type="catalytic activity">
    <reaction evidence="1">
        <text>L-aspartyl-tRNA(Asn) + L-glutamine + ATP + H2O = L-asparaginyl-tRNA(Asn) + L-glutamate + ADP + phosphate + 2 H(+)</text>
        <dbReference type="Rhea" id="RHEA:14513"/>
        <dbReference type="Rhea" id="RHEA-COMP:9674"/>
        <dbReference type="Rhea" id="RHEA-COMP:9677"/>
        <dbReference type="ChEBI" id="CHEBI:15377"/>
        <dbReference type="ChEBI" id="CHEBI:15378"/>
        <dbReference type="ChEBI" id="CHEBI:29985"/>
        <dbReference type="ChEBI" id="CHEBI:30616"/>
        <dbReference type="ChEBI" id="CHEBI:43474"/>
        <dbReference type="ChEBI" id="CHEBI:58359"/>
        <dbReference type="ChEBI" id="CHEBI:78515"/>
        <dbReference type="ChEBI" id="CHEBI:78516"/>
        <dbReference type="ChEBI" id="CHEBI:456216"/>
    </reaction>
</comment>
<comment type="subunit">
    <text evidence="1">Heterotrimer of A, B and C subunits.</text>
</comment>
<comment type="similarity">
    <text evidence="1">Belongs to the GatC family.</text>
</comment>
<protein>
    <recommendedName>
        <fullName evidence="1">Aspartyl/glutamyl-tRNA(Asn/Gln) amidotransferase subunit C</fullName>
        <shortName evidence="1">Asp/Glu-ADT subunit C</shortName>
        <ecNumber evidence="1">6.3.5.-</ecNumber>
    </recommendedName>
</protein>
<accession>Q04SA4</accession>
<dbReference type="EC" id="6.3.5.-" evidence="1"/>
<dbReference type="EMBL" id="CP000350">
    <property type="protein sequence ID" value="ABJ76216.1"/>
    <property type="molecule type" value="Genomic_DNA"/>
</dbReference>
<dbReference type="RefSeq" id="WP_011670412.1">
    <property type="nucleotide sequence ID" value="NC_008510.1"/>
</dbReference>
<dbReference type="SMR" id="Q04SA4"/>
<dbReference type="KEGG" id="lbj:LBJ_1661"/>
<dbReference type="HOGENOM" id="CLU_105899_2_1_12"/>
<dbReference type="Proteomes" id="UP000000656">
    <property type="component" value="Chromosome 1"/>
</dbReference>
<dbReference type="GO" id="GO:0050566">
    <property type="term" value="F:asparaginyl-tRNA synthase (glutamine-hydrolyzing) activity"/>
    <property type="evidence" value="ECO:0007669"/>
    <property type="project" value="RHEA"/>
</dbReference>
<dbReference type="GO" id="GO:0005524">
    <property type="term" value="F:ATP binding"/>
    <property type="evidence" value="ECO:0007669"/>
    <property type="project" value="UniProtKB-KW"/>
</dbReference>
<dbReference type="GO" id="GO:0050567">
    <property type="term" value="F:glutaminyl-tRNA synthase (glutamine-hydrolyzing) activity"/>
    <property type="evidence" value="ECO:0007669"/>
    <property type="project" value="UniProtKB-UniRule"/>
</dbReference>
<dbReference type="GO" id="GO:0070681">
    <property type="term" value="P:glutaminyl-tRNAGln biosynthesis via transamidation"/>
    <property type="evidence" value="ECO:0007669"/>
    <property type="project" value="TreeGrafter"/>
</dbReference>
<dbReference type="GO" id="GO:0006450">
    <property type="term" value="P:regulation of translational fidelity"/>
    <property type="evidence" value="ECO:0007669"/>
    <property type="project" value="InterPro"/>
</dbReference>
<dbReference type="GO" id="GO:0006412">
    <property type="term" value="P:translation"/>
    <property type="evidence" value="ECO:0007669"/>
    <property type="project" value="UniProtKB-UniRule"/>
</dbReference>
<dbReference type="Gene3D" id="1.10.20.60">
    <property type="entry name" value="Glu-tRNAGln amidotransferase C subunit, N-terminal domain"/>
    <property type="match status" value="1"/>
</dbReference>
<dbReference type="HAMAP" id="MF_00122">
    <property type="entry name" value="GatC"/>
    <property type="match status" value="1"/>
</dbReference>
<dbReference type="InterPro" id="IPR036113">
    <property type="entry name" value="Asp/Glu-ADT_sf_sub_c"/>
</dbReference>
<dbReference type="InterPro" id="IPR003837">
    <property type="entry name" value="GatC"/>
</dbReference>
<dbReference type="NCBIfam" id="TIGR00135">
    <property type="entry name" value="gatC"/>
    <property type="match status" value="1"/>
</dbReference>
<dbReference type="PANTHER" id="PTHR15004">
    <property type="entry name" value="GLUTAMYL-TRNA(GLN) AMIDOTRANSFERASE SUBUNIT C, MITOCHONDRIAL"/>
    <property type="match status" value="1"/>
</dbReference>
<dbReference type="PANTHER" id="PTHR15004:SF0">
    <property type="entry name" value="GLUTAMYL-TRNA(GLN) AMIDOTRANSFERASE SUBUNIT C, MITOCHONDRIAL"/>
    <property type="match status" value="1"/>
</dbReference>
<dbReference type="Pfam" id="PF02686">
    <property type="entry name" value="GatC"/>
    <property type="match status" value="1"/>
</dbReference>
<dbReference type="SUPFAM" id="SSF141000">
    <property type="entry name" value="Glu-tRNAGln amidotransferase C subunit"/>
    <property type="match status" value="1"/>
</dbReference>
<evidence type="ECO:0000255" key="1">
    <source>
        <dbReference type="HAMAP-Rule" id="MF_00122"/>
    </source>
</evidence>
<proteinExistence type="inferred from homology"/>
<feature type="chain" id="PRO_1000016138" description="Aspartyl/glutamyl-tRNA(Asn/Gln) amidotransferase subunit C">
    <location>
        <begin position="1"/>
        <end position="96"/>
    </location>
</feature>
<keyword id="KW-0067">ATP-binding</keyword>
<keyword id="KW-0436">Ligase</keyword>
<keyword id="KW-0547">Nucleotide-binding</keyword>
<keyword id="KW-0648">Protein biosynthesis</keyword>
<reference key="1">
    <citation type="journal article" date="2006" name="Proc. Natl. Acad. Sci. U.S.A.">
        <title>Genome reduction in Leptospira borgpetersenii reflects limited transmission potential.</title>
        <authorList>
            <person name="Bulach D.M."/>
            <person name="Zuerner R.L."/>
            <person name="Wilson P."/>
            <person name="Seemann T."/>
            <person name="McGrath A."/>
            <person name="Cullen P.A."/>
            <person name="Davis J."/>
            <person name="Johnson M."/>
            <person name="Kuczek E."/>
            <person name="Alt D.P."/>
            <person name="Peterson-Burch B."/>
            <person name="Coppel R.L."/>
            <person name="Rood J.I."/>
            <person name="Davies J.K."/>
            <person name="Adler B."/>
        </authorList>
    </citation>
    <scope>NUCLEOTIDE SEQUENCE [LARGE SCALE GENOMIC DNA]</scope>
    <source>
        <strain>JB197</strain>
    </source>
</reference>
<gene>
    <name evidence="1" type="primary">gatC</name>
    <name type="ordered locus">LBJ_1661</name>
</gene>